<reference evidence="4" key="1">
    <citation type="journal article" date="2010" name="Mol. Biol. Evol.">
        <title>Parallel evolution of nacre building gene sets in molluscs.</title>
        <authorList>
            <person name="Jackson D.J."/>
            <person name="McDougall C."/>
            <person name="Woodcroft B."/>
            <person name="Moase P."/>
            <person name="Rose R.A."/>
            <person name="Kube M."/>
            <person name="Reinhardt R."/>
            <person name="Rokhsar D.S."/>
            <person name="Montagnani C."/>
            <person name="Joubert C."/>
            <person name="Piquemal D."/>
            <person name="Degnan B.M."/>
        </authorList>
    </citation>
    <scope>NUCLEOTIDE SEQUENCE [MRNA]</scope>
    <scope>IDENTIFICATION</scope>
    <source>
        <tissue evidence="2">Mantle</tissue>
    </source>
</reference>
<reference evidence="4" key="2">
    <citation type="journal article" date="2010" name="Proteome Sci.">
        <title>Proteomic analysis of the organic matrix of the abalone Haliotis asinina calcified shell.</title>
        <authorList>
            <person name="Marie B."/>
            <person name="Marie A."/>
            <person name="Jackson D.J."/>
            <person name="Dubost L."/>
            <person name="Degnan B.M."/>
            <person name="Milet C."/>
            <person name="Marin F."/>
        </authorList>
    </citation>
    <scope>PROTEIN SEQUENCE OF 138-165 AND 246-262</scope>
    <scope>SUBCELLULAR LOCATION</scope>
    <scope>TISSUE SPECIFICITY</scope>
    <source>
        <tissue evidence="3">Shell</tissue>
    </source>
</reference>
<comment type="subcellular location">
    <subcellularLocation>
        <location evidence="3">Secreted</location>
    </subcellularLocation>
</comment>
<comment type="tissue specificity">
    <text evidence="3">Component of the acid-soluble and acid-insoluble organic matrix of calcified shell layers (at protein level).</text>
</comment>
<comment type="sequence caution" evidence="4">
    <conflict type="miscellaneous discrepancy">
        <sequence resource="EMBL" id="GT276036"/>
    </conflict>
    <text>Contaminating sequence. Sequence of unknown origin in the N-terminal part.</text>
</comment>
<proteinExistence type="evidence at protein level"/>
<accession>P86736</accession>
<organism>
    <name type="scientific">Haliotis asinina</name>
    <name type="common">Donkey's ear abalone</name>
    <name type="synonym">Ass's ear abalone</name>
    <dbReference type="NCBI Taxonomy" id="109174"/>
    <lineage>
        <taxon>Eukaryota</taxon>
        <taxon>Metazoa</taxon>
        <taxon>Spiralia</taxon>
        <taxon>Lophotrochozoa</taxon>
        <taxon>Mollusca</taxon>
        <taxon>Gastropoda</taxon>
        <taxon>Vetigastropoda</taxon>
        <taxon>Lepetellida</taxon>
        <taxon>Haliotoidea</taxon>
        <taxon>Haliotidae</taxon>
        <taxon>Haliotis</taxon>
    </lineage>
</organism>
<keyword id="KW-0903">Direct protein sequencing</keyword>
<keyword id="KW-0964">Secreted</keyword>
<feature type="chain" id="PRO_0000399442" description="Aspartate and glycine-rich protein">
    <location>
        <begin position="1" status="less than"/>
        <end position="296"/>
    </location>
</feature>
<feature type="region of interest" description="Disordered" evidence="1">
    <location>
        <begin position="1"/>
        <end position="219"/>
    </location>
</feature>
<feature type="region of interest" description="Disordered" evidence="1">
    <location>
        <begin position="233"/>
        <end position="296"/>
    </location>
</feature>
<feature type="compositionally biased region" description="Gly residues" evidence="1">
    <location>
        <begin position="1"/>
        <end position="77"/>
    </location>
</feature>
<feature type="compositionally biased region" description="Acidic residues" evidence="1">
    <location>
        <begin position="80"/>
        <end position="96"/>
    </location>
</feature>
<feature type="compositionally biased region" description="Acidic residues" evidence="1">
    <location>
        <begin position="103"/>
        <end position="194"/>
    </location>
</feature>
<feature type="compositionally biased region" description="Gly residues" evidence="1">
    <location>
        <begin position="198"/>
        <end position="210"/>
    </location>
</feature>
<feature type="compositionally biased region" description="Low complexity" evidence="1">
    <location>
        <begin position="233"/>
        <end position="243"/>
    </location>
</feature>
<feature type="compositionally biased region" description="Gly residues" evidence="1">
    <location>
        <begin position="244"/>
        <end position="259"/>
    </location>
</feature>
<feature type="compositionally biased region" description="Low complexity" evidence="1">
    <location>
        <begin position="270"/>
        <end position="281"/>
    </location>
</feature>
<feature type="sequence conflict" description="In Ref. 1; GT272438." evidence="4" ref="1">
    <original>DWDDDD</original>
    <variation>HCDDDN</variation>
    <location>
        <begin position="173"/>
        <end position="178"/>
    </location>
</feature>
<feature type="sequence conflict" description="In Ref. 1; GT272438." evidence="4" ref="1">
    <original>GDDDNDDW</original>
    <variation>RDDDNDKC</variation>
    <location>
        <begin position="181"/>
        <end position="188"/>
    </location>
</feature>
<feature type="sequence conflict" description="In Ref. 1; GT277597." evidence="4" ref="1">
    <original>NGN</original>
    <variation>HGH</variation>
    <location>
        <begin position="200"/>
        <end position="202"/>
    </location>
</feature>
<feature type="sequence conflict" description="In Ref. 1; GT271782." evidence="4" ref="1">
    <original>R</original>
    <variation>L</variation>
    <location>
        <position position="291"/>
    </location>
</feature>
<feature type="non-terminal residue" evidence="4">
    <location>
        <position position="1"/>
    </location>
</feature>
<name>DGRP_HALAI</name>
<dbReference type="EMBL" id="GT271782">
    <property type="status" value="NOT_ANNOTATED_CDS"/>
    <property type="molecule type" value="mRNA"/>
</dbReference>
<dbReference type="EMBL" id="GT271787">
    <property type="status" value="NOT_ANNOTATED_CDS"/>
    <property type="molecule type" value="mRNA"/>
</dbReference>
<dbReference type="EMBL" id="GT272378">
    <property type="status" value="NOT_ANNOTATED_CDS"/>
    <property type="molecule type" value="mRNA"/>
</dbReference>
<dbReference type="EMBL" id="GT272419">
    <property type="status" value="NOT_ANNOTATED_CDS"/>
    <property type="molecule type" value="mRNA"/>
</dbReference>
<dbReference type="EMBL" id="GT272438">
    <property type="status" value="NOT_ANNOTATED_CDS"/>
    <property type="molecule type" value="mRNA"/>
</dbReference>
<dbReference type="EMBL" id="GT272624">
    <property type="status" value="NOT_ANNOTATED_CDS"/>
    <property type="molecule type" value="mRNA"/>
</dbReference>
<dbReference type="EMBL" id="GT272807">
    <property type="status" value="NOT_ANNOTATED_CDS"/>
    <property type="molecule type" value="mRNA"/>
</dbReference>
<dbReference type="EMBL" id="GT273116">
    <property type="status" value="NOT_ANNOTATED_CDS"/>
    <property type="molecule type" value="mRNA"/>
</dbReference>
<dbReference type="EMBL" id="GT273211">
    <property type="status" value="NOT_ANNOTATED_CDS"/>
    <property type="molecule type" value="mRNA"/>
</dbReference>
<dbReference type="EMBL" id="GT273288">
    <property type="status" value="NOT_ANNOTATED_CDS"/>
    <property type="molecule type" value="mRNA"/>
</dbReference>
<dbReference type="EMBL" id="GT273436">
    <property type="status" value="NOT_ANNOTATED_CDS"/>
    <property type="molecule type" value="mRNA"/>
</dbReference>
<dbReference type="EMBL" id="GT273497">
    <property type="status" value="NOT_ANNOTATED_CDS"/>
    <property type="molecule type" value="mRNA"/>
</dbReference>
<dbReference type="EMBL" id="GT273624">
    <property type="status" value="NOT_ANNOTATED_CDS"/>
    <property type="molecule type" value="mRNA"/>
</dbReference>
<dbReference type="EMBL" id="GT273649">
    <property type="status" value="NOT_ANNOTATED_CDS"/>
    <property type="molecule type" value="mRNA"/>
</dbReference>
<dbReference type="EMBL" id="GT273756">
    <property type="status" value="NOT_ANNOTATED_CDS"/>
    <property type="molecule type" value="mRNA"/>
</dbReference>
<dbReference type="EMBL" id="GT274299">
    <property type="status" value="NOT_ANNOTATED_CDS"/>
    <property type="molecule type" value="mRNA"/>
</dbReference>
<dbReference type="EMBL" id="GT275124">
    <property type="status" value="NOT_ANNOTATED_CDS"/>
    <property type="molecule type" value="mRNA"/>
</dbReference>
<dbReference type="EMBL" id="GT276036">
    <property type="status" value="NOT_ANNOTATED_CDS"/>
    <property type="molecule type" value="mRNA"/>
</dbReference>
<dbReference type="EMBL" id="GT276847">
    <property type="status" value="NOT_ANNOTATED_CDS"/>
    <property type="molecule type" value="mRNA"/>
</dbReference>
<dbReference type="EMBL" id="GT276888">
    <property type="status" value="NOT_ANNOTATED_CDS"/>
    <property type="molecule type" value="mRNA"/>
</dbReference>
<dbReference type="EMBL" id="GT276990">
    <property type="status" value="NOT_ANNOTATED_CDS"/>
    <property type="molecule type" value="mRNA"/>
</dbReference>
<dbReference type="EMBL" id="GT277235">
    <property type="status" value="NOT_ANNOTATED_CDS"/>
    <property type="molecule type" value="mRNA"/>
</dbReference>
<dbReference type="EMBL" id="GT277353">
    <property type="status" value="NOT_ANNOTATED_CDS"/>
    <property type="molecule type" value="mRNA"/>
</dbReference>
<dbReference type="EMBL" id="GT277414">
    <property type="status" value="NOT_ANNOTATED_CDS"/>
    <property type="molecule type" value="mRNA"/>
</dbReference>
<dbReference type="EMBL" id="GT277422">
    <property type="status" value="NOT_ANNOTATED_CDS"/>
    <property type="molecule type" value="mRNA"/>
</dbReference>
<dbReference type="EMBL" id="GT277597">
    <property type="status" value="NOT_ANNOTATED_CDS"/>
    <property type="molecule type" value="mRNA"/>
</dbReference>
<dbReference type="EMBL" id="EZ420622">
    <property type="status" value="NOT_ANNOTATED_CDS"/>
    <property type="molecule type" value="mRNA"/>
</dbReference>
<dbReference type="SMR" id="P86736"/>
<dbReference type="GO" id="GO:0005576">
    <property type="term" value="C:extracellular region"/>
    <property type="evidence" value="ECO:0000314"/>
    <property type="project" value="UniProtKB"/>
</dbReference>
<dbReference type="InterPro" id="IPR052258">
    <property type="entry name" value="Diverse_Func_Domain-Protein"/>
</dbReference>
<dbReference type="PANTHER" id="PTHR37612">
    <property type="entry name" value="FIBROIN HEAVY CHAIN FIB-H LIKE PROTEIN"/>
    <property type="match status" value="1"/>
</dbReference>
<dbReference type="PANTHER" id="PTHR37612:SF20">
    <property type="entry name" value="PER-HEXAMER REPEAT PROTEIN 5-RELATED"/>
    <property type="match status" value="1"/>
</dbReference>
<sequence>GDGENGNGNGNGNGNGNGNGNGNGNGNGNGNGNGNGNGNGNGNGNGNGNGNGNGNGNGNGNGNGNGNGNGNGNGNGNGYFDDDDWDDFDWDDDDWNDNGNGDNGDDDDFWDDWDDDRFDDDRFDDDRFDDDRFDDDRWDDDDNDDWDDDDRWGDDDNDDWDDDDRWGDDDNDDWDDDDRWGDDDNDDWDDDDRWGDDNGNGNGNGNGNGNGDDDDDNGGYAFLRRALARASARARAAASAAGRSRGGSGGSGGSGGSGGSARARARARARAFASARASSGNGVNGGNGKKRSYTSY</sequence>
<protein>
    <recommendedName>
        <fullName>Aspartate and glycine-rich protein</fullName>
    </recommendedName>
</protein>
<evidence type="ECO:0000256" key="1">
    <source>
        <dbReference type="SAM" id="MobiDB-lite"/>
    </source>
</evidence>
<evidence type="ECO:0000269" key="2">
    <source>
    </source>
</evidence>
<evidence type="ECO:0000269" key="3">
    <source>
    </source>
</evidence>
<evidence type="ECO:0000305" key="4"/>